<organismHost>
    <name type="scientific">Aves</name>
    <dbReference type="NCBI Taxonomy" id="8782"/>
</organismHost>
<organismHost>
    <name type="scientific">Mustela lutreola</name>
    <name type="common">European mink</name>
    <dbReference type="NCBI Taxonomy" id="9666"/>
</organismHost>
<proteinExistence type="inferred from homology"/>
<keyword id="KW-0167">Capsid protein</keyword>
<keyword id="KW-1139">Helical capsid protein</keyword>
<keyword id="KW-1048">Host nucleus</keyword>
<keyword id="KW-0945">Host-virus interaction</keyword>
<keyword id="KW-0687">Ribonucleoprotein</keyword>
<keyword id="KW-0694">RNA-binding</keyword>
<keyword id="KW-0543">Viral nucleoprotein</keyword>
<keyword id="KW-1163">Viral penetration into host nucleus</keyword>
<keyword id="KW-0946">Virion</keyword>
<keyword id="KW-1160">Virus entry into host cell</keyword>
<reference key="1">
    <citation type="journal article" date="1988" name="Arch. Virol.">
        <title>Comparison of the nucleoprotein genes of a chicken and a mink influenza A H 10 virus.</title>
        <authorList>
            <person name="Reinhardt U."/>
            <person name="Scholtissek C."/>
        </authorList>
    </citation>
    <scope>NUCLEOTIDE SEQUENCE [GENOMIC RNA]</scope>
</reference>
<protein>
    <recommendedName>
        <fullName evidence="1">Nucleoprotein</fullName>
    </recommendedName>
    <alternativeName>
        <fullName evidence="1">Nucleocapsid protein</fullName>
        <shortName evidence="1">Protein N</shortName>
    </alternativeName>
</protein>
<accession>P16983</accession>
<organism>
    <name type="scientific">Influenza A virus (strain A/Mink/Sweden/1984 H10N4)</name>
    <dbReference type="NCBI Taxonomy" id="382839"/>
    <lineage>
        <taxon>Viruses</taxon>
        <taxon>Riboviria</taxon>
        <taxon>Orthornavirae</taxon>
        <taxon>Negarnaviricota</taxon>
        <taxon>Polyploviricotina</taxon>
        <taxon>Insthoviricetes</taxon>
        <taxon>Articulavirales</taxon>
        <taxon>Orthomyxoviridae</taxon>
        <taxon>Alphainfluenzavirus</taxon>
        <taxon>Alphainfluenzavirus influenzae</taxon>
        <taxon>Influenza A virus</taxon>
    </lineage>
</organism>
<name>NCAP_I84A3</name>
<comment type="function">
    <text evidence="1">Encapsidates the negative strand viral RNA, protecting it from nucleases. The encapsidated genomic RNA is termed the ribonucleoprotein (RNP) and serves as template for transcription and replication. The RNP needs to be localized in the host nucleus to start an infectious cycle, but is too large to diffuse through the nuclear pore complex. NP comprises at least 2 nuclear localization signals that are responsible for the active RNP import into the nucleus through cellular importin alpha/beta pathway. Later in the infection, nclear export of RNPs are mediated through viral proteins NEP interacting with M1 which binds nucleoproteins. It is possible that nucleoprotein binds directly host exportin-1/XPO1 and plays an active role in RNPs nuclear export. M1 interaction with RNP seems to hide nucleoprotein's nuclear localization signals. Soon after a virion infects a new cell, M1 dissociates from the RNP under acidification of the virion driven by M2 protein. Dissociation of M1 from RNP unmasks nucleoprotein's nuclear localization signals, targeting the RNP to the nucleus.</text>
</comment>
<comment type="subunit">
    <text evidence="1">Homomultimerizes to form the nucleocapsid. May bind host exportin-1/XPO1. Binds to viral genomic RNA. Protein-RNA contacts are mediated by a combination of electrostatic interactions between positively charged residues and the phosphate backbone and planar interactions between aromatic side chains and bases.</text>
</comment>
<comment type="subcellular location">
    <subcellularLocation>
        <location evidence="1">Virion</location>
    </subcellularLocation>
    <subcellularLocation>
        <location evidence="1">Host nucleus</location>
    </subcellularLocation>
</comment>
<comment type="PTM">
    <text evidence="1">Late in virus-infected cells, may be cleaved from a 56-kDa protein to a 53-kDa protein by a cellular caspase. This cleavage might be a marker for the onset of apoptosis in infected cells or have a specific function in virus host interaction.</text>
</comment>
<comment type="similarity">
    <text evidence="1">Belongs to the influenza viruses nucleoprotein family.</text>
</comment>
<dbReference type="EMBL" id="M24454">
    <property type="protein sequence ID" value="AAA43454.1"/>
    <property type="molecule type" value="Genomic_RNA"/>
</dbReference>
<dbReference type="SMR" id="P16983"/>
<dbReference type="GO" id="GO:0019029">
    <property type="term" value="C:helical viral capsid"/>
    <property type="evidence" value="ECO:0007669"/>
    <property type="project" value="UniProtKB-UniRule"/>
</dbReference>
<dbReference type="GO" id="GO:0043657">
    <property type="term" value="C:host cell"/>
    <property type="evidence" value="ECO:0007669"/>
    <property type="project" value="GOC"/>
</dbReference>
<dbReference type="GO" id="GO:0042025">
    <property type="term" value="C:host cell nucleus"/>
    <property type="evidence" value="ECO:0007669"/>
    <property type="project" value="UniProtKB-SubCell"/>
</dbReference>
<dbReference type="GO" id="GO:1990904">
    <property type="term" value="C:ribonucleoprotein complex"/>
    <property type="evidence" value="ECO:0007669"/>
    <property type="project" value="UniProtKB-KW"/>
</dbReference>
<dbReference type="GO" id="GO:0019013">
    <property type="term" value="C:viral nucleocapsid"/>
    <property type="evidence" value="ECO:0007669"/>
    <property type="project" value="UniProtKB-UniRule"/>
</dbReference>
<dbReference type="GO" id="GO:0003723">
    <property type="term" value="F:RNA binding"/>
    <property type="evidence" value="ECO:0007669"/>
    <property type="project" value="UniProtKB-UniRule"/>
</dbReference>
<dbReference type="GO" id="GO:0005198">
    <property type="term" value="F:structural molecule activity"/>
    <property type="evidence" value="ECO:0007669"/>
    <property type="project" value="UniProtKB-UniRule"/>
</dbReference>
<dbReference type="GO" id="GO:0046718">
    <property type="term" value="P:symbiont entry into host cell"/>
    <property type="evidence" value="ECO:0007669"/>
    <property type="project" value="UniProtKB-KW"/>
</dbReference>
<dbReference type="GO" id="GO:0075732">
    <property type="term" value="P:viral penetration into host nucleus"/>
    <property type="evidence" value="ECO:0007669"/>
    <property type="project" value="UniProtKB-UniRule"/>
</dbReference>
<dbReference type="HAMAP" id="MF_04070">
    <property type="entry name" value="INFV_NCAP"/>
    <property type="match status" value="1"/>
</dbReference>
<dbReference type="InterPro" id="IPR002141">
    <property type="entry name" value="Flu_NP"/>
</dbReference>
<dbReference type="Pfam" id="PF00506">
    <property type="entry name" value="Flu_NP"/>
    <property type="match status" value="1"/>
</dbReference>
<dbReference type="SUPFAM" id="SSF161003">
    <property type="entry name" value="flu NP-like"/>
    <property type="match status" value="1"/>
</dbReference>
<gene>
    <name evidence="1" type="primary">NP</name>
</gene>
<evidence type="ECO:0000255" key="1">
    <source>
        <dbReference type="HAMAP-Rule" id="MF_04070"/>
    </source>
</evidence>
<evidence type="ECO:0000256" key="2">
    <source>
        <dbReference type="SAM" id="MobiDB-lite"/>
    </source>
</evidence>
<sequence>MASQGTKRSYEQMETGGERQNATEIRASVGRMVGGIGRFYIQMCTELKLSDHEGRLIQNSITIERMVLSAFDERRNKYLEEHPSAGKDPKKTGGPIYRRRDGKWMRELILYDKEEIRRIWRQANNGEDATAGLTHLMIWHSNLNDATYQRTRALVRTGMDPRMCSLMQGSTLPRRSGAAGAAVKGVGTMVMELIRMIKRGINDRNFWRGENGRRTRIAYERMCNILKGKFQTAAQRAMMDQVRESRNPGNAEIEDLIFLARSALILRGSVAHKSCLPACVYGLAVASGYDFEREGYSLVGIDPFRLLQNSQVFSLIRPNENPAHKSQLAWMACHSAAFEDLRVSSFIRGTRVVPRGQLSTRGVQIASNENMETMDSSTLELRSRYWAIRTRSGGNNNQQRASAGQISVQPTFSVQRNLPFERATIMAAFTGNTEGRTSDMRTEIIRMMESARPEDLSFQGRGVFELSDENATNPIVPSFDMSNEGSYFFGDNAEEYDN</sequence>
<feature type="chain" id="PRO_0000079077" description="Nucleoprotein">
    <location>
        <begin position="1"/>
        <end position="498"/>
    </location>
</feature>
<feature type="region of interest" description="Disordered" evidence="2">
    <location>
        <begin position="1"/>
        <end position="21"/>
    </location>
</feature>
<feature type="short sequence motif" description="Unconventional nuclear localization signal" evidence="1">
    <location>
        <begin position="1"/>
        <end position="18"/>
    </location>
</feature>
<feature type="short sequence motif" description="Bipartite nuclear localization signal" evidence="1">
    <location>
        <begin position="198"/>
        <end position="216"/>
    </location>
</feature>